<comment type="function">
    <text evidence="1">One of the early assembly proteins it binds 23S rRNA. One of the proteins that surrounds the polypeptide exit tunnel on the outside of the ribosome. Forms the main docking site for trigger factor binding to the ribosome.</text>
</comment>
<comment type="subunit">
    <text evidence="1">Part of the 50S ribosomal subunit. Contacts protein L29, and trigger factor when it is bound to the ribosome.</text>
</comment>
<comment type="similarity">
    <text evidence="1">Belongs to the universal ribosomal protein uL23 family.</text>
</comment>
<organism>
    <name type="scientific">Aquifex pyrophilus</name>
    <dbReference type="NCBI Taxonomy" id="2714"/>
    <lineage>
        <taxon>Bacteria</taxon>
        <taxon>Pseudomonadati</taxon>
        <taxon>Aquificota</taxon>
        <taxon>Aquificia</taxon>
        <taxon>Aquificales</taxon>
        <taxon>Aquificaceae</taxon>
        <taxon>Aquifex</taxon>
    </lineage>
</organism>
<accession>Q9ZI48</accession>
<keyword id="KW-0687">Ribonucleoprotein</keyword>
<keyword id="KW-0689">Ribosomal protein</keyword>
<keyword id="KW-0694">RNA-binding</keyword>
<keyword id="KW-0699">rRNA-binding</keyword>
<gene>
    <name evidence="1" type="primary">rplW</name>
    <name evidence="1" type="synonym">rpl23</name>
</gene>
<protein>
    <recommendedName>
        <fullName evidence="1">Large ribosomal subunit protein uL23</fullName>
    </recommendedName>
    <alternativeName>
        <fullName evidence="2">50S ribosomal protein L23</fullName>
    </alternativeName>
</protein>
<evidence type="ECO:0000255" key="1">
    <source>
        <dbReference type="HAMAP-Rule" id="MF_01369"/>
    </source>
</evidence>
<evidence type="ECO:0000305" key="2"/>
<proteinExistence type="inferred from homology"/>
<dbReference type="EMBL" id="AF040100">
    <property type="protein sequence ID" value="AAD08787.1"/>
    <property type="molecule type" value="Genomic_DNA"/>
</dbReference>
<dbReference type="SMR" id="Q9ZI48"/>
<dbReference type="GO" id="GO:1990904">
    <property type="term" value="C:ribonucleoprotein complex"/>
    <property type="evidence" value="ECO:0007669"/>
    <property type="project" value="UniProtKB-KW"/>
</dbReference>
<dbReference type="GO" id="GO:0005840">
    <property type="term" value="C:ribosome"/>
    <property type="evidence" value="ECO:0007669"/>
    <property type="project" value="UniProtKB-KW"/>
</dbReference>
<dbReference type="GO" id="GO:0019843">
    <property type="term" value="F:rRNA binding"/>
    <property type="evidence" value="ECO:0007669"/>
    <property type="project" value="UniProtKB-UniRule"/>
</dbReference>
<dbReference type="GO" id="GO:0003735">
    <property type="term" value="F:structural constituent of ribosome"/>
    <property type="evidence" value="ECO:0007669"/>
    <property type="project" value="InterPro"/>
</dbReference>
<dbReference type="GO" id="GO:0006412">
    <property type="term" value="P:translation"/>
    <property type="evidence" value="ECO:0007669"/>
    <property type="project" value="UniProtKB-UniRule"/>
</dbReference>
<dbReference type="FunFam" id="3.30.70.330:FF:000001">
    <property type="entry name" value="50S ribosomal protein L23"/>
    <property type="match status" value="1"/>
</dbReference>
<dbReference type="Gene3D" id="3.30.70.330">
    <property type="match status" value="1"/>
</dbReference>
<dbReference type="HAMAP" id="MF_01369_B">
    <property type="entry name" value="Ribosomal_uL23_B"/>
    <property type="match status" value="1"/>
</dbReference>
<dbReference type="InterPro" id="IPR012677">
    <property type="entry name" value="Nucleotide-bd_a/b_plait_sf"/>
</dbReference>
<dbReference type="InterPro" id="IPR013025">
    <property type="entry name" value="Ribosomal_uL23-like"/>
</dbReference>
<dbReference type="InterPro" id="IPR012678">
    <property type="entry name" value="Ribosomal_uL23/eL15/eS24_sf"/>
</dbReference>
<dbReference type="NCBIfam" id="NF004363">
    <property type="entry name" value="PRK05738.2-4"/>
    <property type="match status" value="1"/>
</dbReference>
<dbReference type="PANTHER" id="PTHR11620">
    <property type="entry name" value="60S RIBOSOMAL PROTEIN L23A"/>
    <property type="match status" value="1"/>
</dbReference>
<dbReference type="Pfam" id="PF00276">
    <property type="entry name" value="Ribosomal_L23"/>
    <property type="match status" value="1"/>
</dbReference>
<dbReference type="SUPFAM" id="SSF54189">
    <property type="entry name" value="Ribosomal proteins S24e, L23 and L15e"/>
    <property type="match status" value="1"/>
</dbReference>
<reference key="1">
    <citation type="journal article" date="2000" name="J. Mol. Evol.">
        <title>Phylogenetic depth of the bacterial genera Aquifex and Thermotoga inferred from analysis of ribosomal protein, elongation factor, and RNA polymerase subunit sequences.</title>
        <authorList>
            <person name="Bocchetta M."/>
            <person name="Gribaldo S."/>
            <person name="Sanangelantoni A.M."/>
            <person name="Cammarano P."/>
        </authorList>
    </citation>
    <scope>NUCLEOTIDE SEQUENCE [GENOMIC DNA]</scope>
    <source>
        <strain>DSM 6858 / JCM 9492 / Kol5A</strain>
    </source>
</reference>
<feature type="chain" id="PRO_0000129395" description="Large ribosomal subunit protein uL23">
    <location>
        <begin position="1"/>
        <end position="109"/>
    </location>
</feature>
<sequence length="109" mass="13068">MSQRKPWEILIRPIITEKSNRLMEDYNKYTFEVALDASKPEIKEAVEKLFNVKVKKVNTMIVKPKKKRVWERFRQYGTTKKWKKAIVTLEKGINRHPWVCSEVRCRDGC</sequence>
<name>RL23_AQUPY</name>